<name>MSH6_ARATH</name>
<feature type="chain" id="PRO_0000115210" description="DNA mismatch repair protein MSH6">
    <location>
        <begin position="1"/>
        <end position="1324"/>
    </location>
</feature>
<feature type="region of interest" description="Disordered" evidence="2">
    <location>
        <begin position="1"/>
        <end position="114"/>
    </location>
</feature>
<feature type="region of interest" description="Disordered" evidence="2">
    <location>
        <begin position="197"/>
        <end position="294"/>
    </location>
</feature>
<feature type="compositionally biased region" description="Polar residues" evidence="2">
    <location>
        <begin position="1"/>
        <end position="25"/>
    </location>
</feature>
<feature type="compositionally biased region" description="Low complexity" evidence="2">
    <location>
        <begin position="27"/>
        <end position="55"/>
    </location>
</feature>
<feature type="compositionally biased region" description="Pro residues" evidence="2">
    <location>
        <begin position="56"/>
        <end position="67"/>
    </location>
</feature>
<feature type="compositionally biased region" description="Low complexity" evidence="2">
    <location>
        <begin position="71"/>
        <end position="83"/>
    </location>
</feature>
<feature type="compositionally biased region" description="Acidic residues" evidence="2">
    <location>
        <begin position="201"/>
        <end position="224"/>
    </location>
</feature>
<feature type="compositionally biased region" description="Basic and acidic residues" evidence="2">
    <location>
        <begin position="225"/>
        <end position="235"/>
    </location>
</feature>
<feature type="compositionally biased region" description="Acidic residues" evidence="2">
    <location>
        <begin position="236"/>
        <end position="261"/>
    </location>
</feature>
<feature type="compositionally biased region" description="Basic and acidic residues" evidence="2">
    <location>
        <begin position="262"/>
        <end position="273"/>
    </location>
</feature>
<feature type="binding site" evidence="1">
    <location>
        <begin position="1083"/>
        <end position="1090"/>
    </location>
    <ligand>
        <name>ATP</name>
        <dbReference type="ChEBI" id="CHEBI:30616"/>
    </ligand>
</feature>
<protein>
    <recommendedName>
        <fullName>DNA mismatch repair protein MSH6</fullName>
        <shortName>AtMSH6</shortName>
    </recommendedName>
    <alternativeName>
        <fullName>MutS protein homolog 6</fullName>
    </alternativeName>
</protein>
<keyword id="KW-0025">Alternative splicing</keyword>
<keyword id="KW-0067">ATP-binding</keyword>
<keyword id="KW-0227">DNA damage</keyword>
<keyword id="KW-0234">DNA repair</keyword>
<keyword id="KW-0238">DNA-binding</keyword>
<keyword id="KW-0547">Nucleotide-binding</keyword>
<keyword id="KW-0539">Nucleus</keyword>
<keyword id="KW-1185">Reference proteome</keyword>
<gene>
    <name type="primary">MSH6</name>
    <name type="synonym">AGAA.3</name>
    <name type="synonym">MSH6-1</name>
    <name type="ordered locus">At4g02070</name>
    <name type="ORF">T10M13.8</name>
</gene>
<evidence type="ECO:0000255" key="1"/>
<evidence type="ECO:0000256" key="2">
    <source>
        <dbReference type="SAM" id="MobiDB-lite"/>
    </source>
</evidence>
<evidence type="ECO:0000269" key="3">
    <source>
    </source>
</evidence>
<evidence type="ECO:0000269" key="4">
    <source>
    </source>
</evidence>
<evidence type="ECO:0000269" key="5">
    <source>
    </source>
</evidence>
<evidence type="ECO:0000305" key="6"/>
<accession>O04716</accession>
<proteinExistence type="evidence at protein level"/>
<dbReference type="EMBL" id="AF001535">
    <property type="protein sequence ID" value="AAB57798.1"/>
    <property type="status" value="ALT_SEQ"/>
    <property type="molecule type" value="Genomic_DNA"/>
</dbReference>
<dbReference type="EMBL" id="AJ245967">
    <property type="protein sequence ID" value="CAB53337.1"/>
    <property type="molecule type" value="Genomic_DNA"/>
</dbReference>
<dbReference type="EMBL" id="AF001308">
    <property type="protein sequence ID" value="AAC78699.1"/>
    <property type="molecule type" value="Genomic_DNA"/>
</dbReference>
<dbReference type="EMBL" id="AL161493">
    <property type="protein sequence ID" value="CAB80700.1"/>
    <property type="molecule type" value="Genomic_DNA"/>
</dbReference>
<dbReference type="EMBL" id="CP002687">
    <property type="protein sequence ID" value="AEE82119.1"/>
    <property type="molecule type" value="Genomic_DNA"/>
</dbReference>
<dbReference type="PIR" id="T01508">
    <property type="entry name" value="T01508"/>
</dbReference>
<dbReference type="RefSeq" id="NP_192116.1">
    <molecule id="O04716-1"/>
    <property type="nucleotide sequence ID" value="NM_116438.2"/>
</dbReference>
<dbReference type="SMR" id="O04716"/>
<dbReference type="BioGRID" id="13436">
    <property type="interactions" value="1"/>
</dbReference>
<dbReference type="FunCoup" id="O04716">
    <property type="interactions" value="3499"/>
</dbReference>
<dbReference type="STRING" id="3702.O04716"/>
<dbReference type="GlyGen" id="O04716">
    <property type="glycosylation" value="1 site"/>
</dbReference>
<dbReference type="iPTMnet" id="O04716"/>
<dbReference type="PaxDb" id="3702-AT4G02070.1"/>
<dbReference type="ProteomicsDB" id="250778">
    <molecule id="O04716-1"/>
</dbReference>
<dbReference type="EnsemblPlants" id="AT4G02070.1">
    <molecule id="O04716-1"/>
    <property type="protein sequence ID" value="AT4G02070.1"/>
    <property type="gene ID" value="AT4G02070"/>
</dbReference>
<dbReference type="GeneID" id="828147"/>
<dbReference type="Gramene" id="AT4G02070.1">
    <molecule id="O04716-1"/>
    <property type="protein sequence ID" value="AT4G02070.1"/>
    <property type="gene ID" value="AT4G02070"/>
</dbReference>
<dbReference type="KEGG" id="ath:AT4G02070"/>
<dbReference type="Araport" id="AT4G02070"/>
<dbReference type="TAIR" id="AT4G02070">
    <property type="gene designation" value="MSH6"/>
</dbReference>
<dbReference type="eggNOG" id="KOG0217">
    <property type="taxonomic scope" value="Eukaryota"/>
</dbReference>
<dbReference type="InParanoid" id="O04716"/>
<dbReference type="PhylomeDB" id="O04716"/>
<dbReference type="PRO" id="PR:O04716"/>
<dbReference type="Proteomes" id="UP000006548">
    <property type="component" value="Chromosome 4"/>
</dbReference>
<dbReference type="ExpressionAtlas" id="O04716">
    <property type="expression patterns" value="baseline and differential"/>
</dbReference>
<dbReference type="GO" id="GO:0005634">
    <property type="term" value="C:nucleus"/>
    <property type="evidence" value="ECO:0007669"/>
    <property type="project" value="UniProtKB-SubCell"/>
</dbReference>
<dbReference type="GO" id="GO:0005524">
    <property type="term" value="F:ATP binding"/>
    <property type="evidence" value="ECO:0007669"/>
    <property type="project" value="UniProtKB-KW"/>
</dbReference>
<dbReference type="GO" id="GO:0140664">
    <property type="term" value="F:ATP-dependent DNA damage sensor activity"/>
    <property type="evidence" value="ECO:0007669"/>
    <property type="project" value="InterPro"/>
</dbReference>
<dbReference type="GO" id="GO:0003684">
    <property type="term" value="F:damaged DNA binding"/>
    <property type="evidence" value="ECO:0000314"/>
    <property type="project" value="TAIR"/>
</dbReference>
<dbReference type="GO" id="GO:0030983">
    <property type="term" value="F:mismatched DNA binding"/>
    <property type="evidence" value="ECO:0007669"/>
    <property type="project" value="InterPro"/>
</dbReference>
<dbReference type="GO" id="GO:0006298">
    <property type="term" value="P:mismatch repair"/>
    <property type="evidence" value="ECO:0000250"/>
    <property type="project" value="TAIR"/>
</dbReference>
<dbReference type="GO" id="GO:0006290">
    <property type="term" value="P:pyrimidine dimer repair"/>
    <property type="evidence" value="ECO:0000315"/>
    <property type="project" value="TAIR"/>
</dbReference>
<dbReference type="CDD" id="cd20404">
    <property type="entry name" value="Tudor_Agenet_AtEML-like"/>
    <property type="match status" value="1"/>
</dbReference>
<dbReference type="FunFam" id="1.10.1420.10:FF:000005">
    <property type="entry name" value="DNA mismatch repair protein"/>
    <property type="match status" value="1"/>
</dbReference>
<dbReference type="FunFam" id="2.30.30.140:FF:000093">
    <property type="entry name" value="DNA mismatch repair protein"/>
    <property type="match status" value="1"/>
</dbReference>
<dbReference type="FunFam" id="3.30.420.110:FF:000012">
    <property type="entry name" value="DNA mismatch repair protein"/>
    <property type="match status" value="1"/>
</dbReference>
<dbReference type="FunFam" id="3.40.1170.10:FF:000002">
    <property type="entry name" value="DNA mismatch repair protein"/>
    <property type="match status" value="1"/>
</dbReference>
<dbReference type="FunFam" id="3.40.50.300:FF:001885">
    <property type="entry name" value="DNA mismatch repair protein"/>
    <property type="match status" value="1"/>
</dbReference>
<dbReference type="Gene3D" id="1.10.1420.10">
    <property type="match status" value="2"/>
</dbReference>
<dbReference type="Gene3D" id="2.30.30.140">
    <property type="match status" value="1"/>
</dbReference>
<dbReference type="Gene3D" id="3.40.1170.10">
    <property type="entry name" value="DNA repair protein MutS, domain I"/>
    <property type="match status" value="1"/>
</dbReference>
<dbReference type="Gene3D" id="3.30.420.110">
    <property type="entry name" value="MutS, connector domain"/>
    <property type="match status" value="1"/>
</dbReference>
<dbReference type="Gene3D" id="3.40.50.300">
    <property type="entry name" value="P-loop containing nucleotide triphosphate hydrolases"/>
    <property type="match status" value="1"/>
</dbReference>
<dbReference type="InterPro" id="IPR007695">
    <property type="entry name" value="DNA_mismatch_repair_MutS-lik_N"/>
</dbReference>
<dbReference type="InterPro" id="IPR017261">
    <property type="entry name" value="DNA_mismatch_repair_MutS/MSH"/>
</dbReference>
<dbReference type="InterPro" id="IPR000432">
    <property type="entry name" value="DNA_mismatch_repair_MutS_C"/>
</dbReference>
<dbReference type="InterPro" id="IPR007861">
    <property type="entry name" value="DNA_mismatch_repair_MutS_clamp"/>
</dbReference>
<dbReference type="InterPro" id="IPR007696">
    <property type="entry name" value="DNA_mismatch_repair_MutS_core"/>
</dbReference>
<dbReference type="InterPro" id="IPR016151">
    <property type="entry name" value="DNA_mismatch_repair_MutS_N"/>
</dbReference>
<dbReference type="InterPro" id="IPR036187">
    <property type="entry name" value="DNA_mismatch_repair_MutS_sf"/>
</dbReference>
<dbReference type="InterPro" id="IPR007860">
    <property type="entry name" value="DNA_mmatch_repair_MutS_con_dom"/>
</dbReference>
<dbReference type="InterPro" id="IPR045076">
    <property type="entry name" value="MutS"/>
</dbReference>
<dbReference type="InterPro" id="IPR036678">
    <property type="entry name" value="MutS_con_dom_sf"/>
</dbReference>
<dbReference type="InterPro" id="IPR027417">
    <property type="entry name" value="P-loop_NTPase"/>
</dbReference>
<dbReference type="InterPro" id="IPR002999">
    <property type="entry name" value="Tudor"/>
</dbReference>
<dbReference type="NCBIfam" id="NF003810">
    <property type="entry name" value="PRK05399.1"/>
    <property type="match status" value="1"/>
</dbReference>
<dbReference type="PANTHER" id="PTHR11361:SF150">
    <property type="entry name" value="DNA MISMATCH REPAIR PROTEIN MSH6"/>
    <property type="match status" value="1"/>
</dbReference>
<dbReference type="PANTHER" id="PTHR11361">
    <property type="entry name" value="DNA MISMATCH REPAIR PROTEIN MUTS FAMILY MEMBER"/>
    <property type="match status" value="1"/>
</dbReference>
<dbReference type="Pfam" id="PF01624">
    <property type="entry name" value="MutS_I"/>
    <property type="match status" value="1"/>
</dbReference>
<dbReference type="Pfam" id="PF05188">
    <property type="entry name" value="MutS_II"/>
    <property type="match status" value="1"/>
</dbReference>
<dbReference type="Pfam" id="PF05192">
    <property type="entry name" value="MutS_III"/>
    <property type="match status" value="1"/>
</dbReference>
<dbReference type="Pfam" id="PF05190">
    <property type="entry name" value="MutS_IV"/>
    <property type="match status" value="1"/>
</dbReference>
<dbReference type="Pfam" id="PF00488">
    <property type="entry name" value="MutS_V"/>
    <property type="match status" value="1"/>
</dbReference>
<dbReference type="PIRSF" id="PIRSF037677">
    <property type="entry name" value="DNA_mis_repair_Msh6"/>
    <property type="match status" value="1"/>
</dbReference>
<dbReference type="SMART" id="SM00534">
    <property type="entry name" value="MUTSac"/>
    <property type="match status" value="1"/>
</dbReference>
<dbReference type="SMART" id="SM00533">
    <property type="entry name" value="MUTSd"/>
    <property type="match status" value="1"/>
</dbReference>
<dbReference type="SMART" id="SM00333">
    <property type="entry name" value="TUDOR"/>
    <property type="match status" value="1"/>
</dbReference>
<dbReference type="SUPFAM" id="SSF55271">
    <property type="entry name" value="DNA repair protein MutS, domain I"/>
    <property type="match status" value="1"/>
</dbReference>
<dbReference type="SUPFAM" id="SSF53150">
    <property type="entry name" value="DNA repair protein MutS, domain II"/>
    <property type="match status" value="1"/>
</dbReference>
<dbReference type="SUPFAM" id="SSF48334">
    <property type="entry name" value="DNA repair protein MutS, domain III"/>
    <property type="match status" value="1"/>
</dbReference>
<dbReference type="SUPFAM" id="SSF52540">
    <property type="entry name" value="P-loop containing nucleoside triphosphate hydrolases"/>
    <property type="match status" value="1"/>
</dbReference>
<dbReference type="SUPFAM" id="SSF63748">
    <property type="entry name" value="Tudor/PWWP/MBT"/>
    <property type="match status" value="1"/>
</dbReference>
<dbReference type="PROSITE" id="PS00486">
    <property type="entry name" value="DNA_MISMATCH_REPAIR_2"/>
    <property type="match status" value="1"/>
</dbReference>
<comment type="function">
    <text evidence="3 4 5">Component of the post-replicative DNA mismatch repair system (MMR). Forms the heterodimer MutS alpha (MSH2-MSH6 heterodimer) which binds to DNA mismatches thereby initiating DNA repair. MutS alpha recognizes single base mismatches and trinucleotide insertion-deletion loops (IDL) in the DNA. Is involved in a UV-B-induced DNA damage response pathway.</text>
</comment>
<comment type="subunit">
    <text>Heterodimer consisting of MSH2-MSH6 (MutS alpha).</text>
</comment>
<comment type="subcellular location">
    <subcellularLocation>
        <location evidence="6">Nucleus</location>
    </subcellularLocation>
</comment>
<comment type="alternative products">
    <event type="alternative splicing"/>
    <isoform>
        <id>O04716-1</id>
        <name>1</name>
        <sequence type="displayed"/>
    </isoform>
    <text>A number of isoforms are produced. According to EST sequences.</text>
</comment>
<comment type="induction">
    <text evidence="5">By UV-B.</text>
</comment>
<comment type="similarity">
    <text evidence="6">Belongs to the DNA mismatch repair MutS family.</text>
</comment>
<comment type="sequence caution" evidence="6">
    <conflict type="erroneous gene model prediction">
        <sequence resource="EMBL-CDS" id="AAB57798"/>
    </conflict>
</comment>
<reference key="1">
    <citation type="submission" date="1997-05" db="EMBL/GenBank/DDBJ databases">
        <authorList>
            <person name="Till S."/>
            <person name="Granat S."/>
            <person name="Parnell L."/>
            <person name="Kaplan N."/>
            <person name="Hoffman J."/>
            <person name="Lodhi M."/>
            <person name="Johnson A.F."/>
            <person name="Dedhia N."/>
            <person name="Martienssen R."/>
            <person name="McCombie W.R."/>
        </authorList>
    </citation>
    <scope>NUCLEOTIDE SEQUENCE [GENOMIC DNA]</scope>
    <source>
        <strain>cv. Landsberg erecta</strain>
    </source>
</reference>
<reference key="2">
    <citation type="journal article" date="1999" name="Mol. Gen. Genet.">
        <title>Four mismatch repair paralogues coexist in Arabidopsis thaliana: AtMSH2, AtMSH3, AtMSH6-1 and AtMSH6-2.</title>
        <authorList>
            <person name="Ade J."/>
            <person name="Belzile F."/>
            <person name="Philippe H."/>
            <person name="Doutriaux M.P."/>
        </authorList>
    </citation>
    <scope>NUCLEOTIDE SEQUENCE [GENOMIC DNA]</scope>
    <source>
        <strain>cv. Columbia</strain>
    </source>
</reference>
<reference key="3">
    <citation type="journal article" date="1999" name="Nature">
        <title>Sequence and analysis of chromosome 4 of the plant Arabidopsis thaliana.</title>
        <authorList>
            <person name="Mayer K.F.X."/>
            <person name="Schueller C."/>
            <person name="Wambutt R."/>
            <person name="Murphy G."/>
            <person name="Volckaert G."/>
            <person name="Pohl T."/>
            <person name="Duesterhoeft A."/>
            <person name="Stiekema W."/>
            <person name="Entian K.-D."/>
            <person name="Terryn N."/>
            <person name="Harris B."/>
            <person name="Ansorge W."/>
            <person name="Brandt P."/>
            <person name="Grivell L.A."/>
            <person name="Rieger M."/>
            <person name="Weichselgartner M."/>
            <person name="de Simone V."/>
            <person name="Obermaier B."/>
            <person name="Mache R."/>
            <person name="Mueller M."/>
            <person name="Kreis M."/>
            <person name="Delseny M."/>
            <person name="Puigdomenech P."/>
            <person name="Watson M."/>
            <person name="Schmidtheini T."/>
            <person name="Reichert B."/>
            <person name="Portetelle D."/>
            <person name="Perez-Alonso M."/>
            <person name="Boutry M."/>
            <person name="Bancroft I."/>
            <person name="Vos P."/>
            <person name="Hoheisel J."/>
            <person name="Zimmermann W."/>
            <person name="Wedler H."/>
            <person name="Ridley P."/>
            <person name="Langham S.-A."/>
            <person name="McCullagh B."/>
            <person name="Bilham L."/>
            <person name="Robben J."/>
            <person name="van der Schueren J."/>
            <person name="Grymonprez B."/>
            <person name="Chuang Y.-J."/>
            <person name="Vandenbussche F."/>
            <person name="Braeken M."/>
            <person name="Weltjens I."/>
            <person name="Voet M."/>
            <person name="Bastiaens I."/>
            <person name="Aert R."/>
            <person name="Defoor E."/>
            <person name="Weitzenegger T."/>
            <person name="Bothe G."/>
            <person name="Ramsperger U."/>
            <person name="Hilbert H."/>
            <person name="Braun M."/>
            <person name="Holzer E."/>
            <person name="Brandt A."/>
            <person name="Peters S."/>
            <person name="van Staveren M."/>
            <person name="Dirkse W."/>
            <person name="Mooijman P."/>
            <person name="Klein Lankhorst R."/>
            <person name="Rose M."/>
            <person name="Hauf J."/>
            <person name="Koetter P."/>
            <person name="Berneiser S."/>
            <person name="Hempel S."/>
            <person name="Feldpausch M."/>
            <person name="Lamberth S."/>
            <person name="Van den Daele H."/>
            <person name="De Keyser A."/>
            <person name="Buysshaert C."/>
            <person name="Gielen J."/>
            <person name="Villarroel R."/>
            <person name="De Clercq R."/>
            <person name="van Montagu M."/>
            <person name="Rogers J."/>
            <person name="Cronin A."/>
            <person name="Quail M.A."/>
            <person name="Bray-Allen S."/>
            <person name="Clark L."/>
            <person name="Doggett J."/>
            <person name="Hall S."/>
            <person name="Kay M."/>
            <person name="Lennard N."/>
            <person name="McLay K."/>
            <person name="Mayes R."/>
            <person name="Pettett A."/>
            <person name="Rajandream M.A."/>
            <person name="Lyne M."/>
            <person name="Benes V."/>
            <person name="Rechmann S."/>
            <person name="Borkova D."/>
            <person name="Bloecker H."/>
            <person name="Scharfe M."/>
            <person name="Grimm M."/>
            <person name="Loehnert T.-H."/>
            <person name="Dose S."/>
            <person name="de Haan M."/>
            <person name="Maarse A.C."/>
            <person name="Schaefer M."/>
            <person name="Mueller-Auer S."/>
            <person name="Gabel C."/>
            <person name="Fuchs M."/>
            <person name="Fartmann B."/>
            <person name="Granderath K."/>
            <person name="Dauner D."/>
            <person name="Herzl A."/>
            <person name="Neumann S."/>
            <person name="Argiriou A."/>
            <person name="Vitale D."/>
            <person name="Liguori R."/>
            <person name="Piravandi E."/>
            <person name="Massenet O."/>
            <person name="Quigley F."/>
            <person name="Clabauld G."/>
            <person name="Muendlein A."/>
            <person name="Felber R."/>
            <person name="Schnabl S."/>
            <person name="Hiller R."/>
            <person name="Schmidt W."/>
            <person name="Lecharny A."/>
            <person name="Aubourg S."/>
            <person name="Chefdor F."/>
            <person name="Cooke R."/>
            <person name="Berger C."/>
            <person name="Monfort A."/>
            <person name="Casacuberta E."/>
            <person name="Gibbons T."/>
            <person name="Weber N."/>
            <person name="Vandenbol M."/>
            <person name="Bargues M."/>
            <person name="Terol J."/>
            <person name="Torres A."/>
            <person name="Perez-Perez A."/>
            <person name="Purnelle B."/>
            <person name="Bent E."/>
            <person name="Johnson S."/>
            <person name="Tacon D."/>
            <person name="Jesse T."/>
            <person name="Heijnen L."/>
            <person name="Schwarz S."/>
            <person name="Scholler P."/>
            <person name="Heber S."/>
            <person name="Francs P."/>
            <person name="Bielke C."/>
            <person name="Frishman D."/>
            <person name="Haase D."/>
            <person name="Lemcke K."/>
            <person name="Mewes H.-W."/>
            <person name="Stocker S."/>
            <person name="Zaccaria P."/>
            <person name="Bevan M."/>
            <person name="Wilson R.K."/>
            <person name="de la Bastide M."/>
            <person name="Habermann K."/>
            <person name="Parnell L."/>
            <person name="Dedhia N."/>
            <person name="Gnoj L."/>
            <person name="Schutz K."/>
            <person name="Huang E."/>
            <person name="Spiegel L."/>
            <person name="Sekhon M."/>
            <person name="Murray J."/>
            <person name="Sheet P."/>
            <person name="Cordes M."/>
            <person name="Abu-Threideh J."/>
            <person name="Stoneking T."/>
            <person name="Kalicki J."/>
            <person name="Graves T."/>
            <person name="Harmon G."/>
            <person name="Edwards J."/>
            <person name="Latreille P."/>
            <person name="Courtney L."/>
            <person name="Cloud J."/>
            <person name="Abbott A."/>
            <person name="Scott K."/>
            <person name="Johnson D."/>
            <person name="Minx P."/>
            <person name="Bentley D."/>
            <person name="Fulton B."/>
            <person name="Miller N."/>
            <person name="Greco T."/>
            <person name="Kemp K."/>
            <person name="Kramer J."/>
            <person name="Fulton L."/>
            <person name="Mardis E."/>
            <person name="Dante M."/>
            <person name="Pepin K."/>
            <person name="Hillier L.W."/>
            <person name="Nelson J."/>
            <person name="Spieth J."/>
            <person name="Ryan E."/>
            <person name="Andrews S."/>
            <person name="Geisel C."/>
            <person name="Layman D."/>
            <person name="Du H."/>
            <person name="Ali J."/>
            <person name="Berghoff A."/>
            <person name="Jones K."/>
            <person name="Drone K."/>
            <person name="Cotton M."/>
            <person name="Joshu C."/>
            <person name="Antonoiu B."/>
            <person name="Zidanic M."/>
            <person name="Strong C."/>
            <person name="Sun H."/>
            <person name="Lamar B."/>
            <person name="Yordan C."/>
            <person name="Ma P."/>
            <person name="Zhong J."/>
            <person name="Preston R."/>
            <person name="Vil D."/>
            <person name="Shekher M."/>
            <person name="Matero A."/>
            <person name="Shah R."/>
            <person name="Swaby I.K."/>
            <person name="O'Shaughnessy A."/>
            <person name="Rodriguez M."/>
            <person name="Hoffman J."/>
            <person name="Till S."/>
            <person name="Granat S."/>
            <person name="Shohdy N."/>
            <person name="Hasegawa A."/>
            <person name="Hameed A."/>
            <person name="Lodhi M."/>
            <person name="Johnson A."/>
            <person name="Chen E."/>
            <person name="Marra M.A."/>
            <person name="Martienssen R."/>
            <person name="McCombie W.R."/>
        </authorList>
    </citation>
    <scope>NUCLEOTIDE SEQUENCE [LARGE SCALE GENOMIC DNA]</scope>
    <source>
        <strain>cv. Columbia</strain>
    </source>
</reference>
<reference key="4">
    <citation type="journal article" date="2017" name="Plant J.">
        <title>Araport11: a complete reannotation of the Arabidopsis thaliana reference genome.</title>
        <authorList>
            <person name="Cheng C.Y."/>
            <person name="Krishnakumar V."/>
            <person name="Chan A.P."/>
            <person name="Thibaud-Nissen F."/>
            <person name="Schobel S."/>
            <person name="Town C.D."/>
        </authorList>
    </citation>
    <scope>GENOME REANNOTATION</scope>
    <source>
        <strain>cv. Columbia</strain>
    </source>
</reference>
<reference key="5">
    <citation type="journal article" date="2000" name="Plant Cell">
        <title>Arabidopsis MutS homologs-AtMSH2, AtMSH3, AtMSH6, and a novel AtMSH7-form three distinct protein heterodimers with different specificities for mismatched DNA.</title>
        <authorList>
            <person name="Culligan K.M."/>
            <person name="Hays J.B."/>
        </authorList>
    </citation>
    <scope>FUNCTION</scope>
    <scope>INTERACTION WITH MSH2</scope>
</reference>
<reference key="6">
    <citation type="journal article" date="2003" name="Nucleic Acids Res.">
        <title>Dissimilar mispair-recognition spectra of Arabidopsis DNA-mismatch-repair proteins MSH2*MSH6 (MutSalpha) and MSH2*MSH7 (MutSgamma).</title>
        <authorList>
            <person name="Wu S.Y."/>
            <person name="Culligan K."/>
            <person name="Lamers M."/>
            <person name="Hays J."/>
        </authorList>
    </citation>
    <scope>FUNCTION</scope>
    <scope>INTERACTION WITH MSH2</scope>
</reference>
<reference key="7">
    <citation type="journal article" date="2011" name="J. Exp. Bot.">
        <title>Regulation of plant MSH2 and MSH6 genes in the UV-B-induced DNA damage response.</title>
        <authorList>
            <person name="Lario L.D."/>
            <person name="Ramirez-Parra E."/>
            <person name="Gutierrez C."/>
            <person name="Casati P."/>
            <person name="Spampinato C.P."/>
        </authorList>
    </citation>
    <scope>FUNCTION</scope>
    <scope>INDUCTION BY UV-B</scope>
</reference>
<sequence length="1324" mass="146797">MAPSRRQISGRSPLVNQQRQITSFFGKSASSSSSPSPSPSPSLSNKKTPKSNNPNPKSPSPSPSPPKKTPKLNPNPSSNLPARSPSPGPDTPSPVQSKFKKPLLVIGQTPSPPQSVVITYGDEVVGKQVRVYWPLDKKWYDGSVTFYDKGEGKHVVEYEDGEEESLDLGKEKTEWVVGEKSGDRFNRLKRGASALRKVVTDSDDDVEMGNVEEDKSDGDDSSDEDWGKNVGKEVCESEEDDVELVDENEMDEEELVEEKDEETSKVNRVSKTDSRKRKTSEVTKSGGEKKSKTDTGTILKGFKASVVEPAKKIGQADRVVKGLEDNVLDGDALARFGARDSEKFRFLGVDRRDAKRRRPTDENYDPRTLYLPPDFVKKLTGGQRQWWEFKAKHMDKVVFFKMGKFYELFEMDAHVGAKELDIQYMKGEQPHCGFPEKNFSVNIEKLVRKGYRVLVVEQTETPDQLEQRRKETGSKDKVVKREVCAVVTKGTLTDGEMLLTNPDASYLMALTEGGESLTNPTAEHNFGVCLVDVATQKIILGQFKDDQDCSALSCLLSEMRPVEIIKPAKVLSYATERTIVRQTRNPLVNNLVPLSEFWDSEKTIYEVGIIYKRINCQPSSAYSSEGKILGDGSSFLPKMLSELATEDKNGSLALSALGGAIYYLRQAFLDESLLRFAKFESLPYCDFSNVNEKQHMVLDAAALENLEIFENSRNGGYSGTLYAQLNQCITASGKRLLKTWLARPLYNTELIKERQDAVAILRGENLPYSLEFRKSLSRLPDMERLIARMFSSIEASGRNGDKVVLYEDTAKKQVQEFISTLRGCETMAEACSSLRAILKHDTSRRLLHLLTPGQSLPNISSSIKYFKDAFDWVEAHNSGRVIPHEGADEEYDCACKTVEEFESSLKKHLKEQRKLLGDASINYVTVGKDEYLLEVPESLSGSVPHDYELCSSKKGVSRYWTPTIKKLLKELSQAKSEKESALKSISQRLIGRFCEHQEKWRQLVSATAELDVLISLAFASDSYEGVRCRPVISGSTSDGVPHLSATGLGHPVLRGDSLGRGSFVPNNVKIGGAEKASFILLTGPNMGGKSTLLRQVCLAVILAQIGADVPAETFEVSPVDKICVRMGAKDHIMAGQSTFLTELSETAVMLTSATRNSLVVLDELGRGTATSDGQAIAESVLEHFIEKVQCRGFFSTHYHRLSVDYQTNPKVSLCHMACQIGEGIGGVEEVTFLYRLTPGACPKSYGVNVARLAGLPDYVLQRAVIKSQEFEALYGKNHRKTDHKLAAMIKQIISSVASDSDYSASKDSLCELHSMANTFLRLTN</sequence>
<organism>
    <name type="scientific">Arabidopsis thaliana</name>
    <name type="common">Mouse-ear cress</name>
    <dbReference type="NCBI Taxonomy" id="3702"/>
    <lineage>
        <taxon>Eukaryota</taxon>
        <taxon>Viridiplantae</taxon>
        <taxon>Streptophyta</taxon>
        <taxon>Embryophyta</taxon>
        <taxon>Tracheophyta</taxon>
        <taxon>Spermatophyta</taxon>
        <taxon>Magnoliopsida</taxon>
        <taxon>eudicotyledons</taxon>
        <taxon>Gunneridae</taxon>
        <taxon>Pentapetalae</taxon>
        <taxon>rosids</taxon>
        <taxon>malvids</taxon>
        <taxon>Brassicales</taxon>
        <taxon>Brassicaceae</taxon>
        <taxon>Camelineae</taxon>
        <taxon>Arabidopsis</taxon>
    </lineage>
</organism>